<feature type="signal peptide">
    <location>
        <begin position="1" status="less than"/>
        <end position="8"/>
    </location>
</feature>
<feature type="chain" id="PRO_0000419223" description="Acidic phospholipase A2 daboiatoxin B chain">
    <location>
        <begin position="9"/>
        <end position="130"/>
    </location>
</feature>
<feature type="active site" evidence="1">
    <location>
        <position position="55"/>
    </location>
</feature>
<feature type="active site" evidence="1">
    <location>
        <position position="97"/>
    </location>
</feature>
<feature type="binding site" evidence="1">
    <location>
        <position position="35"/>
    </location>
    <ligand>
        <name>Ca(2+)</name>
        <dbReference type="ChEBI" id="CHEBI:29108"/>
    </ligand>
</feature>
<feature type="binding site" evidence="1">
    <location>
        <position position="37"/>
    </location>
    <ligand>
        <name>Ca(2+)</name>
        <dbReference type="ChEBI" id="CHEBI:29108"/>
    </ligand>
</feature>
<feature type="binding site" evidence="1">
    <location>
        <position position="39"/>
    </location>
    <ligand>
        <name>Ca(2+)</name>
        <dbReference type="ChEBI" id="CHEBI:29108"/>
    </ligand>
</feature>
<feature type="binding site" evidence="1">
    <location>
        <position position="56"/>
    </location>
    <ligand>
        <name>Ca(2+)</name>
        <dbReference type="ChEBI" id="CHEBI:29108"/>
    </ligand>
</feature>
<feature type="disulfide bond" evidence="4">
    <location>
        <begin position="34"/>
        <end position="123"/>
    </location>
</feature>
<feature type="disulfide bond" evidence="4">
    <location>
        <begin position="36"/>
        <end position="52"/>
    </location>
</feature>
<feature type="disulfide bond" evidence="4">
    <location>
        <begin position="51"/>
        <end position="103"/>
    </location>
</feature>
<feature type="disulfide bond" evidence="4">
    <location>
        <begin position="57"/>
        <end position="130"/>
    </location>
</feature>
<feature type="disulfide bond" evidence="4">
    <location>
        <begin position="58"/>
        <end position="96"/>
    </location>
</feature>
<feature type="disulfide bond" evidence="4">
    <location>
        <begin position="65"/>
        <end position="89"/>
    </location>
</feature>
<feature type="disulfide bond" evidence="4">
    <location>
        <begin position="83"/>
        <end position="94"/>
    </location>
</feature>
<feature type="non-terminal residue">
    <location>
        <position position="1"/>
    </location>
</feature>
<feature type="helix" evidence="7">
    <location>
        <begin position="10"/>
        <end position="20"/>
    </location>
</feature>
<feature type="turn" evidence="7">
    <location>
        <begin position="23"/>
        <end position="26"/>
    </location>
</feature>
<feature type="helix" evidence="7">
    <location>
        <begin position="27"/>
        <end position="29"/>
    </location>
</feature>
<feature type="turn" evidence="7">
    <location>
        <begin position="33"/>
        <end position="35"/>
    </location>
</feature>
<feature type="strand" evidence="7">
    <location>
        <begin position="36"/>
        <end position="38"/>
    </location>
</feature>
<feature type="helix" evidence="7">
    <location>
        <begin position="47"/>
        <end position="59"/>
    </location>
</feature>
<feature type="strand" evidence="7">
    <location>
        <begin position="67"/>
        <end position="69"/>
    </location>
</feature>
<feature type="strand" evidence="7">
    <location>
        <begin position="75"/>
        <end position="77"/>
    </location>
</feature>
<feature type="strand" evidence="7">
    <location>
        <begin position="80"/>
        <end position="82"/>
    </location>
</feature>
<feature type="helix" evidence="7">
    <location>
        <begin position="88"/>
        <end position="106"/>
    </location>
</feature>
<feature type="strand" evidence="7">
    <location>
        <begin position="108"/>
        <end position="110"/>
    </location>
</feature>
<feature type="turn" evidence="7">
    <location>
        <begin position="120"/>
        <end position="122"/>
    </location>
</feature>
<keyword id="KW-0002">3D-structure</keyword>
<keyword id="KW-0106">Calcium</keyword>
<keyword id="KW-1015">Disulfide bond</keyword>
<keyword id="KW-0378">Hydrolase</keyword>
<keyword id="KW-0395">Inflammatory response</keyword>
<keyword id="KW-0442">Lipid degradation</keyword>
<keyword id="KW-0443">Lipid metabolism</keyword>
<keyword id="KW-0479">Metal-binding</keyword>
<keyword id="KW-0959">Myotoxin</keyword>
<keyword id="KW-0528">Neurotoxin</keyword>
<keyword id="KW-0638">Presynaptic neurotoxin</keyword>
<keyword id="KW-0964">Secreted</keyword>
<keyword id="KW-0732">Signal</keyword>
<keyword id="KW-0800">Toxin</keyword>
<dbReference type="EC" id="3.1.1.4"/>
<dbReference type="EMBL" id="AY286006">
    <property type="protein sequence ID" value="AAP37177.1"/>
    <property type="molecule type" value="mRNA"/>
</dbReference>
<dbReference type="PDB" id="2H4C">
    <property type="method" value="X-ray"/>
    <property type="resolution" value="2.60 A"/>
    <property type="chains" value="B/D/F/H=9-130"/>
</dbReference>
<dbReference type="PDBsum" id="2H4C"/>
<dbReference type="SMR" id="Q7T3T5"/>
<dbReference type="EvolutionaryTrace" id="Q7T3T5"/>
<dbReference type="GO" id="GO:0005576">
    <property type="term" value="C:extracellular region"/>
    <property type="evidence" value="ECO:0007669"/>
    <property type="project" value="UniProtKB-SubCell"/>
</dbReference>
<dbReference type="GO" id="GO:0005509">
    <property type="term" value="F:calcium ion binding"/>
    <property type="evidence" value="ECO:0007669"/>
    <property type="project" value="InterPro"/>
</dbReference>
<dbReference type="GO" id="GO:0047498">
    <property type="term" value="F:calcium-dependent phospholipase A2 activity"/>
    <property type="evidence" value="ECO:0007669"/>
    <property type="project" value="TreeGrafter"/>
</dbReference>
<dbReference type="GO" id="GO:0005543">
    <property type="term" value="F:phospholipid binding"/>
    <property type="evidence" value="ECO:0007669"/>
    <property type="project" value="TreeGrafter"/>
</dbReference>
<dbReference type="GO" id="GO:0090729">
    <property type="term" value="F:toxin activity"/>
    <property type="evidence" value="ECO:0007669"/>
    <property type="project" value="UniProtKB-KW"/>
</dbReference>
<dbReference type="GO" id="GO:0050482">
    <property type="term" value="P:arachidonate secretion"/>
    <property type="evidence" value="ECO:0007669"/>
    <property type="project" value="InterPro"/>
</dbReference>
<dbReference type="GO" id="GO:0006954">
    <property type="term" value="P:inflammatory response"/>
    <property type="evidence" value="ECO:0007669"/>
    <property type="project" value="UniProtKB-KW"/>
</dbReference>
<dbReference type="GO" id="GO:0016042">
    <property type="term" value="P:lipid catabolic process"/>
    <property type="evidence" value="ECO:0007669"/>
    <property type="project" value="UniProtKB-KW"/>
</dbReference>
<dbReference type="GO" id="GO:0042130">
    <property type="term" value="P:negative regulation of T cell proliferation"/>
    <property type="evidence" value="ECO:0007669"/>
    <property type="project" value="TreeGrafter"/>
</dbReference>
<dbReference type="GO" id="GO:0006644">
    <property type="term" value="P:phospholipid metabolic process"/>
    <property type="evidence" value="ECO:0007669"/>
    <property type="project" value="InterPro"/>
</dbReference>
<dbReference type="CDD" id="cd00125">
    <property type="entry name" value="PLA2c"/>
    <property type="match status" value="1"/>
</dbReference>
<dbReference type="FunFam" id="1.20.90.10:FF:000001">
    <property type="entry name" value="Basic phospholipase A2 homolog"/>
    <property type="match status" value="1"/>
</dbReference>
<dbReference type="Gene3D" id="1.20.90.10">
    <property type="entry name" value="Phospholipase A2 domain"/>
    <property type="match status" value="1"/>
</dbReference>
<dbReference type="InterPro" id="IPR001211">
    <property type="entry name" value="PLipase_A2"/>
</dbReference>
<dbReference type="InterPro" id="IPR033112">
    <property type="entry name" value="PLipase_A2_Asp_AS"/>
</dbReference>
<dbReference type="InterPro" id="IPR016090">
    <property type="entry name" value="PLipase_A2_dom"/>
</dbReference>
<dbReference type="InterPro" id="IPR036444">
    <property type="entry name" value="PLipase_A2_dom_sf"/>
</dbReference>
<dbReference type="InterPro" id="IPR033113">
    <property type="entry name" value="PLipase_A2_His_AS"/>
</dbReference>
<dbReference type="PANTHER" id="PTHR11716">
    <property type="entry name" value="PHOSPHOLIPASE A2 FAMILY MEMBER"/>
    <property type="match status" value="1"/>
</dbReference>
<dbReference type="PANTHER" id="PTHR11716:SF9">
    <property type="entry name" value="PHOSPHOLIPASE A2, MEMBRANE ASSOCIATED"/>
    <property type="match status" value="1"/>
</dbReference>
<dbReference type="Pfam" id="PF00068">
    <property type="entry name" value="Phospholip_A2_1"/>
    <property type="match status" value="1"/>
</dbReference>
<dbReference type="PRINTS" id="PR00389">
    <property type="entry name" value="PHPHLIPASEA2"/>
</dbReference>
<dbReference type="SMART" id="SM00085">
    <property type="entry name" value="PA2c"/>
    <property type="match status" value="1"/>
</dbReference>
<dbReference type="SUPFAM" id="SSF48619">
    <property type="entry name" value="Phospholipase A2, PLA2"/>
    <property type="match status" value="1"/>
</dbReference>
<dbReference type="PROSITE" id="PS00119">
    <property type="entry name" value="PA2_ASP"/>
    <property type="match status" value="1"/>
</dbReference>
<dbReference type="PROSITE" id="PS00118">
    <property type="entry name" value="PA2_HIS"/>
    <property type="match status" value="1"/>
</dbReference>
<evidence type="ECO:0000250" key="1"/>
<evidence type="ECO:0000255" key="2">
    <source>
        <dbReference type="PROSITE-ProRule" id="PRU10035"/>
    </source>
</evidence>
<evidence type="ECO:0000255" key="3">
    <source>
        <dbReference type="PROSITE-ProRule" id="PRU10036"/>
    </source>
</evidence>
<evidence type="ECO:0000269" key="4">
    <source>
    </source>
</evidence>
<evidence type="ECO:0000305" key="5"/>
<evidence type="ECO:0000305" key="6">
    <source>
    </source>
</evidence>
<evidence type="ECO:0007829" key="7">
    <source>
        <dbReference type="PDB" id="2H4C"/>
    </source>
</evidence>
<sequence>MCLIGVEGNLFQFARLIDAKQEAFSFFKYISYGCYCGWGGQGTPKDATDRCCFVHDCCYARVKGCNPKLVEYSYSYRTGKIVCGGDDPCLRAVCECDRVAAICFRENMNTYDKKYMLYSIFDCKEESDQC</sequence>
<comment type="function">
    <text>Monomer: Snake venom phospholipase A2 (PLA2) that shows a high PLA2 activity (2110 umol/min/mg).</text>
</comment>
<comment type="function">
    <text>Heterodimer (A and B chains): snake venom phospholipase A2 that shows a moderate PLA2 activity (1377 umol/min/mg). Acts as a presynaptic neurotoxin. In vivo, induces edema and produces neurotoxic symptoms in mice. It exhibits indirect hemolysis and a strong myonecrotic activity and is cytotoxic. PLA2 catalyzes the calcium-dependent hydrolysis of the 2-acyl groups in 3-sn-phosphoglycerides.</text>
</comment>
<comment type="catalytic activity">
    <reaction evidence="2 3">
        <text>a 1,2-diacyl-sn-glycero-3-phosphocholine + H2O = a 1-acyl-sn-glycero-3-phosphocholine + a fatty acid + H(+)</text>
        <dbReference type="Rhea" id="RHEA:15801"/>
        <dbReference type="ChEBI" id="CHEBI:15377"/>
        <dbReference type="ChEBI" id="CHEBI:15378"/>
        <dbReference type="ChEBI" id="CHEBI:28868"/>
        <dbReference type="ChEBI" id="CHEBI:57643"/>
        <dbReference type="ChEBI" id="CHEBI:58168"/>
        <dbReference type="EC" id="3.1.1.4"/>
    </reaction>
</comment>
<comment type="cofactor">
    <cofactor evidence="1">
        <name>Ca(2+)</name>
        <dbReference type="ChEBI" id="CHEBI:29108"/>
    </cofactor>
    <text evidence="1">Binds 1 Ca(2+) ion.</text>
</comment>
<comment type="subunit">
    <text evidence="4">Heterodimer of an acidic protein having phospholipase A2 activity (B chain) and an A chain which weakly inhibits the B chain enzymatic activity but potentiates its lethal potency.</text>
</comment>
<comment type="subcellular location">
    <subcellularLocation>
        <location>Secreted</location>
    </subcellularLocation>
</comment>
<comment type="tissue specificity">
    <text>Expressed by the venom gland.</text>
</comment>
<comment type="toxic dose">
    <text evidence="4">Monomer: LD(50) of DbTx-B alone is estimated to be 0.5 ug/g by intraperitoneal injection into mice.</text>
</comment>
<comment type="toxic dose">
    <text evidence="4">Heterodimer (A and B chains): LD(50) is estimated to be about 0.1 ug/g by intraperitoneal injection into mice.</text>
</comment>
<comment type="miscellaneous">
    <text evidence="6">Negative results: does not provoke hemorrhage.</text>
</comment>
<comment type="similarity">
    <text evidence="5">Belongs to the phospholipase A2 family. Group II subfamily. D49 sub-subfamily.</text>
</comment>
<organism>
    <name type="scientific">Daboia siamensis</name>
    <name type="common">Eastern Russel's viper</name>
    <name type="synonym">Daboia russelii siamensis</name>
    <dbReference type="NCBI Taxonomy" id="343250"/>
    <lineage>
        <taxon>Eukaryota</taxon>
        <taxon>Metazoa</taxon>
        <taxon>Chordata</taxon>
        <taxon>Craniata</taxon>
        <taxon>Vertebrata</taxon>
        <taxon>Euteleostomi</taxon>
        <taxon>Lepidosauria</taxon>
        <taxon>Squamata</taxon>
        <taxon>Bifurcata</taxon>
        <taxon>Unidentata</taxon>
        <taxon>Episquamata</taxon>
        <taxon>Toxicofera</taxon>
        <taxon>Serpentes</taxon>
        <taxon>Colubroidea</taxon>
        <taxon>Viperidae</taxon>
        <taxon>Viperinae</taxon>
        <taxon>Daboia</taxon>
    </lineage>
</organism>
<protein>
    <recommendedName>
        <fullName>Acidic phospholipase A2 daboiatoxin B chain</fullName>
        <shortName>DbTx-B</shortName>
        <shortName>svPLA2</shortName>
        <ecNumber>3.1.1.4</ecNumber>
    </recommendedName>
    <alternativeName>
        <fullName>Acidic phospholipase A2-II</fullName>
    </alternativeName>
    <alternativeName>
        <fullName>Phosphatidylcholine 2-acylhydrolase</fullName>
    </alternativeName>
</protein>
<name>PA2AB_DABSI</name>
<reference key="1">
    <citation type="submission" date="2003-04" db="EMBL/GenBank/DDBJ databases">
        <title>Biochemical and pharmacological properties of three phospholipases from Vipera russelli siamensis.</title>
        <authorList>
            <person name="Jia Y.-H."/>
            <person name="Jin Y."/>
            <person name="Chen R.-Q."/>
            <person name="Li D.-S."/>
            <person name="Wang W.-Y."/>
            <person name="Xiong Y.-L."/>
        </authorList>
    </citation>
    <scope>NUCLEOTIDE SEQUENCE [MRNA]</scope>
</reference>
<reference key="2">
    <citation type="journal article" date="1995" name="Toxicon">
        <title>A major lethal factor of the venom of Burmese Russell's viper (Daboia russelli siamensis): isolation, N-terminal sequencing and biological activities of daboiatoxin.</title>
        <authorList>
            <person name="Thwin M.M."/>
            <person name="Gopalakrishnakone P."/>
            <person name="Yuen R."/>
            <person name="Tan C.H."/>
        </authorList>
    </citation>
    <scope>FUNCTION</scope>
</reference>
<reference key="3">
    <citation type="journal article" date="1996" name="Toxicon">
        <title>Synaptosomal binding of 125I-labelled daboiatoxin, a new PLA2 neurotoxin from the venom of Daboia russelli siamensis.</title>
        <authorList>
            <person name="Thwin M.M."/>
            <person name="Gopalakrishnakone P."/>
            <person name="Yuen R."/>
            <person name="Tan C.H."/>
        </authorList>
    </citation>
    <scope>FUNCTION</scope>
</reference>
<reference key="4">
    <citation type="journal article" date="2007" name="Acta Crystallogr. D">
        <title>Structural and pharmacological comparison of daboiatoxin from Daboia russelli siamensis with viperotoxin F and vipoxin from other vipers.</title>
        <authorList>
            <person name="Gopalan G."/>
            <person name="Thwin M.M."/>
            <person name="Gopalakrishnakone P."/>
            <person name="Swaminathan K."/>
        </authorList>
    </citation>
    <scope>X-RAY CRYSTALLOGRAPHY (2.60 ANGSTROMS) OF 9-130</scope>
    <scope>DISULFIDE BOND</scope>
    <scope>SUBUNIT</scope>
    <scope>TOXIC DOSE</scope>
    <source>
        <tissue>Venom</tissue>
    </source>
</reference>
<accession>Q7T3T5</accession>
<proteinExistence type="evidence at protein level"/>